<dbReference type="EC" id="1.14.11.-" evidence="1"/>
<dbReference type="EMBL" id="CP000271">
    <property type="protein sequence ID" value="ABE35724.1"/>
    <property type="molecule type" value="Genomic_DNA"/>
</dbReference>
<dbReference type="RefSeq" id="WP_007178512.1">
    <property type="nucleotide sequence ID" value="NZ_CP008762.1"/>
</dbReference>
<dbReference type="SMR" id="Q13JL5"/>
<dbReference type="STRING" id="266265.Bxe_B0219"/>
<dbReference type="KEGG" id="bxb:DR64_5563"/>
<dbReference type="KEGG" id="bxe:Bxe_B0219"/>
<dbReference type="eggNOG" id="COG3128">
    <property type="taxonomic scope" value="Bacteria"/>
</dbReference>
<dbReference type="OrthoDB" id="9812472at2"/>
<dbReference type="Proteomes" id="UP000001817">
    <property type="component" value="Chromosome 2"/>
</dbReference>
<dbReference type="GO" id="GO:0016706">
    <property type="term" value="F:2-oxoglutarate-dependent dioxygenase activity"/>
    <property type="evidence" value="ECO:0007669"/>
    <property type="project" value="UniProtKB-UniRule"/>
</dbReference>
<dbReference type="GO" id="GO:0005506">
    <property type="term" value="F:iron ion binding"/>
    <property type="evidence" value="ECO:0007669"/>
    <property type="project" value="UniProtKB-UniRule"/>
</dbReference>
<dbReference type="GO" id="GO:0031418">
    <property type="term" value="F:L-ascorbic acid binding"/>
    <property type="evidence" value="ECO:0007669"/>
    <property type="project" value="UniProtKB-KW"/>
</dbReference>
<dbReference type="GO" id="GO:0006974">
    <property type="term" value="P:DNA damage response"/>
    <property type="evidence" value="ECO:0007669"/>
    <property type="project" value="TreeGrafter"/>
</dbReference>
<dbReference type="GO" id="GO:0006879">
    <property type="term" value="P:intracellular iron ion homeostasis"/>
    <property type="evidence" value="ECO:0007669"/>
    <property type="project" value="TreeGrafter"/>
</dbReference>
<dbReference type="Gene3D" id="2.60.120.620">
    <property type="entry name" value="q2cbj1_9rhob like domain"/>
    <property type="match status" value="1"/>
</dbReference>
<dbReference type="Gene3D" id="4.10.860.20">
    <property type="entry name" value="Rabenosyn, Rab binding domain"/>
    <property type="match status" value="1"/>
</dbReference>
<dbReference type="HAMAP" id="MF_00657">
    <property type="entry name" value="Hydroxyl_YbiX"/>
    <property type="match status" value="1"/>
</dbReference>
<dbReference type="InterPro" id="IPR005123">
    <property type="entry name" value="Oxoglu/Fe-dep_dioxygenase_dom"/>
</dbReference>
<dbReference type="InterPro" id="IPR041097">
    <property type="entry name" value="PKHD_C"/>
</dbReference>
<dbReference type="InterPro" id="IPR023550">
    <property type="entry name" value="PKHD_hydroxylase"/>
</dbReference>
<dbReference type="InterPro" id="IPR006620">
    <property type="entry name" value="Pro_4_hyd_alph"/>
</dbReference>
<dbReference type="InterPro" id="IPR044862">
    <property type="entry name" value="Pro_4_hyd_alph_FE2OG_OXY"/>
</dbReference>
<dbReference type="NCBIfam" id="NF003974">
    <property type="entry name" value="PRK05467.1-3"/>
    <property type="match status" value="1"/>
</dbReference>
<dbReference type="NCBIfam" id="NF003975">
    <property type="entry name" value="PRK05467.1-4"/>
    <property type="match status" value="1"/>
</dbReference>
<dbReference type="PANTHER" id="PTHR41536">
    <property type="entry name" value="PKHD-TYPE HYDROXYLASE YBIX"/>
    <property type="match status" value="1"/>
</dbReference>
<dbReference type="PANTHER" id="PTHR41536:SF1">
    <property type="entry name" value="PKHD-TYPE HYDROXYLASE YBIX"/>
    <property type="match status" value="1"/>
</dbReference>
<dbReference type="Pfam" id="PF13640">
    <property type="entry name" value="2OG-FeII_Oxy_3"/>
    <property type="match status" value="1"/>
</dbReference>
<dbReference type="Pfam" id="PF18331">
    <property type="entry name" value="PKHD_C"/>
    <property type="match status" value="1"/>
</dbReference>
<dbReference type="SMART" id="SM00702">
    <property type="entry name" value="P4Hc"/>
    <property type="match status" value="1"/>
</dbReference>
<dbReference type="SUPFAM" id="SSF51197">
    <property type="entry name" value="Clavaminate synthase-like"/>
    <property type="match status" value="1"/>
</dbReference>
<dbReference type="PROSITE" id="PS51471">
    <property type="entry name" value="FE2OG_OXY"/>
    <property type="match status" value="1"/>
</dbReference>
<evidence type="ECO:0000255" key="1">
    <source>
        <dbReference type="HAMAP-Rule" id="MF_00657"/>
    </source>
</evidence>
<keyword id="KW-0223">Dioxygenase</keyword>
<keyword id="KW-0408">Iron</keyword>
<keyword id="KW-0479">Metal-binding</keyword>
<keyword id="KW-0560">Oxidoreductase</keyword>
<keyword id="KW-1185">Reference proteome</keyword>
<keyword id="KW-0847">Vitamin C</keyword>
<sequence>MLLHIPNVLNAEQLRIVRERLDTAGDAWVDGRATAGYQGAPVKRNQQIAEHTPIARELGDVILASIERNPLFISSVLPNQVYPPLFNRYEGGMQFGSHVDGAVRVLPNGVKLRTDVSVTLFISDPADYDGGELVIEDTYGVQQVKLPAGDMIVYPATSLHQVTPVTRGVRVASFFWVQSLVRSDTQRAMLFDMDTAIQRLNATNADDAARRSLVGIYHNLLRTWSEP</sequence>
<protein>
    <recommendedName>
        <fullName evidence="1">PKHD-type hydroxylase Bxeno_B2756</fullName>
        <ecNumber evidence="1">1.14.11.-</ecNumber>
    </recommendedName>
</protein>
<gene>
    <name type="ordered locus">Bxeno_B2756</name>
    <name type="ORF">Bxe_B0219</name>
</gene>
<accession>Q13JL5</accession>
<proteinExistence type="inferred from homology"/>
<organism>
    <name type="scientific">Paraburkholderia xenovorans (strain LB400)</name>
    <dbReference type="NCBI Taxonomy" id="266265"/>
    <lineage>
        <taxon>Bacteria</taxon>
        <taxon>Pseudomonadati</taxon>
        <taxon>Pseudomonadota</taxon>
        <taxon>Betaproteobacteria</taxon>
        <taxon>Burkholderiales</taxon>
        <taxon>Burkholderiaceae</taxon>
        <taxon>Paraburkholderia</taxon>
    </lineage>
</organism>
<reference key="1">
    <citation type="journal article" date="2006" name="Proc. Natl. Acad. Sci. U.S.A.">
        <title>Burkholderia xenovorans LB400 harbors a multi-replicon, 9.73-Mbp genome shaped for versatility.</title>
        <authorList>
            <person name="Chain P.S.G."/>
            <person name="Denef V.J."/>
            <person name="Konstantinidis K.T."/>
            <person name="Vergez L.M."/>
            <person name="Agullo L."/>
            <person name="Reyes V.L."/>
            <person name="Hauser L."/>
            <person name="Cordova M."/>
            <person name="Gomez L."/>
            <person name="Gonzalez M."/>
            <person name="Land M."/>
            <person name="Lao V."/>
            <person name="Larimer F."/>
            <person name="LiPuma J.J."/>
            <person name="Mahenthiralingam E."/>
            <person name="Malfatti S.A."/>
            <person name="Marx C.J."/>
            <person name="Parnell J.J."/>
            <person name="Ramette A."/>
            <person name="Richardson P."/>
            <person name="Seeger M."/>
            <person name="Smith D."/>
            <person name="Spilker T."/>
            <person name="Sul W.J."/>
            <person name="Tsoi T.V."/>
            <person name="Ulrich L.E."/>
            <person name="Zhulin I.B."/>
            <person name="Tiedje J.M."/>
        </authorList>
    </citation>
    <scope>NUCLEOTIDE SEQUENCE [LARGE SCALE GENOMIC DNA]</scope>
    <source>
        <strain>LB400</strain>
    </source>
</reference>
<feature type="chain" id="PRO_0000346475" description="PKHD-type hydroxylase Bxeno_B2756">
    <location>
        <begin position="1"/>
        <end position="227"/>
    </location>
</feature>
<feature type="domain" description="Fe2OG dioxygenase" evidence="1">
    <location>
        <begin position="80"/>
        <end position="179"/>
    </location>
</feature>
<feature type="binding site" evidence="1">
    <location>
        <position position="98"/>
    </location>
    <ligand>
        <name>Fe cation</name>
        <dbReference type="ChEBI" id="CHEBI:24875"/>
    </ligand>
</feature>
<feature type="binding site" evidence="1">
    <location>
        <position position="100"/>
    </location>
    <ligand>
        <name>Fe cation</name>
        <dbReference type="ChEBI" id="CHEBI:24875"/>
    </ligand>
</feature>
<feature type="binding site" evidence="1">
    <location>
        <position position="160"/>
    </location>
    <ligand>
        <name>Fe cation</name>
        <dbReference type="ChEBI" id="CHEBI:24875"/>
    </ligand>
</feature>
<feature type="binding site" evidence="1">
    <location>
        <position position="170"/>
    </location>
    <ligand>
        <name>2-oxoglutarate</name>
        <dbReference type="ChEBI" id="CHEBI:16810"/>
    </ligand>
</feature>
<name>Y7756_PARXL</name>
<comment type="cofactor">
    <cofactor evidence="1">
        <name>Fe(2+)</name>
        <dbReference type="ChEBI" id="CHEBI:29033"/>
    </cofactor>
    <text evidence="1">Binds 1 Fe(2+) ion per subunit.</text>
</comment>
<comment type="cofactor">
    <cofactor evidence="1">
        <name>L-ascorbate</name>
        <dbReference type="ChEBI" id="CHEBI:38290"/>
    </cofactor>
</comment>